<organism>
    <name type="scientific">Shewanella amazonensis (strain ATCC BAA-1098 / SB2B)</name>
    <dbReference type="NCBI Taxonomy" id="326297"/>
    <lineage>
        <taxon>Bacteria</taxon>
        <taxon>Pseudomonadati</taxon>
        <taxon>Pseudomonadota</taxon>
        <taxon>Gammaproteobacteria</taxon>
        <taxon>Alteromonadales</taxon>
        <taxon>Shewanellaceae</taxon>
        <taxon>Shewanella</taxon>
    </lineage>
</organism>
<sequence length="363" mass="40542">MKESVIRKLEGLLERNEEVLALLSDASIISDQDRFRALSKEYAQLEDVVKGFKAYQQAVADLETAKEMLEEDDPELKEMAQEEIKSAKASLERLEAELQILLLPKDPNDEANAFVEIRAGAGGDEAAIFAGDLFRMYSRYAETQRWQVEIMSANEGEHGGYKEVIARFSGERVYGKLKFESGGHRVQRVPETESQGRVHTSACTVAVLHEVPEAEAVEINPSELRIDTFRASGAGGQHVNKTDSAIRITHLPTGTVVECQDERSQHKNKARAMSVLVARLQAAEDEKRRSAEATTRRNLVGSGDRSERIRTYNFPQGRVSDHRINLTLYRLNEVMEGDLNALIEPIVQEHQADLLAALADEQG</sequence>
<proteinExistence type="inferred from homology"/>
<feature type="chain" id="PRO_1000004946" description="Peptide chain release factor 1">
    <location>
        <begin position="1"/>
        <end position="363"/>
    </location>
</feature>
<feature type="region of interest" description="Disordered" evidence="2">
    <location>
        <begin position="286"/>
        <end position="305"/>
    </location>
</feature>
<feature type="compositionally biased region" description="Basic and acidic residues" evidence="2">
    <location>
        <begin position="286"/>
        <end position="295"/>
    </location>
</feature>
<feature type="modified residue" description="N5-methylglutamine" evidence="1">
    <location>
        <position position="237"/>
    </location>
</feature>
<protein>
    <recommendedName>
        <fullName evidence="1">Peptide chain release factor 1</fullName>
        <shortName evidence="1">RF-1</shortName>
    </recommendedName>
</protein>
<evidence type="ECO:0000255" key="1">
    <source>
        <dbReference type="HAMAP-Rule" id="MF_00093"/>
    </source>
</evidence>
<evidence type="ECO:0000256" key="2">
    <source>
        <dbReference type="SAM" id="MobiDB-lite"/>
    </source>
</evidence>
<name>RF1_SHEAM</name>
<comment type="function">
    <text evidence="1">Peptide chain release factor 1 directs the termination of translation in response to the peptide chain termination codons UAG and UAA.</text>
</comment>
<comment type="subcellular location">
    <subcellularLocation>
        <location evidence="1">Cytoplasm</location>
    </subcellularLocation>
</comment>
<comment type="PTM">
    <text evidence="1">Methylated by PrmC. Methylation increases the termination efficiency of RF1.</text>
</comment>
<comment type="similarity">
    <text evidence="1">Belongs to the prokaryotic/mitochondrial release factor family.</text>
</comment>
<accession>A1S8R2</accession>
<dbReference type="EMBL" id="CP000507">
    <property type="protein sequence ID" value="ABM00769.1"/>
    <property type="molecule type" value="Genomic_DNA"/>
</dbReference>
<dbReference type="RefSeq" id="WP_011760675.1">
    <property type="nucleotide sequence ID" value="NC_008700.1"/>
</dbReference>
<dbReference type="SMR" id="A1S8R2"/>
<dbReference type="STRING" id="326297.Sama_2566"/>
<dbReference type="KEGG" id="saz:Sama_2566"/>
<dbReference type="eggNOG" id="COG0216">
    <property type="taxonomic scope" value="Bacteria"/>
</dbReference>
<dbReference type="HOGENOM" id="CLU_036856_0_1_6"/>
<dbReference type="OrthoDB" id="9806673at2"/>
<dbReference type="Proteomes" id="UP000009175">
    <property type="component" value="Chromosome"/>
</dbReference>
<dbReference type="GO" id="GO:0005737">
    <property type="term" value="C:cytoplasm"/>
    <property type="evidence" value="ECO:0007669"/>
    <property type="project" value="UniProtKB-SubCell"/>
</dbReference>
<dbReference type="GO" id="GO:0016149">
    <property type="term" value="F:translation release factor activity, codon specific"/>
    <property type="evidence" value="ECO:0007669"/>
    <property type="project" value="UniProtKB-UniRule"/>
</dbReference>
<dbReference type="FunFam" id="3.30.160.20:FF:000004">
    <property type="entry name" value="Peptide chain release factor 1"/>
    <property type="match status" value="1"/>
</dbReference>
<dbReference type="FunFam" id="3.30.70.1660:FF:000002">
    <property type="entry name" value="Peptide chain release factor 1"/>
    <property type="match status" value="1"/>
</dbReference>
<dbReference type="FunFam" id="3.30.70.1660:FF:000004">
    <property type="entry name" value="Peptide chain release factor 1"/>
    <property type="match status" value="1"/>
</dbReference>
<dbReference type="Gene3D" id="3.30.160.20">
    <property type="match status" value="1"/>
</dbReference>
<dbReference type="Gene3D" id="3.30.70.1660">
    <property type="match status" value="1"/>
</dbReference>
<dbReference type="Gene3D" id="6.10.140.1950">
    <property type="match status" value="1"/>
</dbReference>
<dbReference type="HAMAP" id="MF_00093">
    <property type="entry name" value="Rel_fac_1"/>
    <property type="match status" value="1"/>
</dbReference>
<dbReference type="InterPro" id="IPR005139">
    <property type="entry name" value="PCRF"/>
</dbReference>
<dbReference type="InterPro" id="IPR000352">
    <property type="entry name" value="Pep_chain_release_fac_I"/>
</dbReference>
<dbReference type="InterPro" id="IPR045853">
    <property type="entry name" value="Pep_chain_release_fac_I_sf"/>
</dbReference>
<dbReference type="InterPro" id="IPR050057">
    <property type="entry name" value="Prokaryotic/Mito_RF"/>
</dbReference>
<dbReference type="InterPro" id="IPR004373">
    <property type="entry name" value="RF-1"/>
</dbReference>
<dbReference type="NCBIfam" id="TIGR00019">
    <property type="entry name" value="prfA"/>
    <property type="match status" value="1"/>
</dbReference>
<dbReference type="NCBIfam" id="NF001859">
    <property type="entry name" value="PRK00591.1"/>
    <property type="match status" value="1"/>
</dbReference>
<dbReference type="PANTHER" id="PTHR43804">
    <property type="entry name" value="LD18447P"/>
    <property type="match status" value="1"/>
</dbReference>
<dbReference type="PANTHER" id="PTHR43804:SF7">
    <property type="entry name" value="LD18447P"/>
    <property type="match status" value="1"/>
</dbReference>
<dbReference type="Pfam" id="PF03462">
    <property type="entry name" value="PCRF"/>
    <property type="match status" value="1"/>
</dbReference>
<dbReference type="Pfam" id="PF00472">
    <property type="entry name" value="RF-1"/>
    <property type="match status" value="1"/>
</dbReference>
<dbReference type="SMART" id="SM00937">
    <property type="entry name" value="PCRF"/>
    <property type="match status" value="1"/>
</dbReference>
<dbReference type="SUPFAM" id="SSF75620">
    <property type="entry name" value="Release factor"/>
    <property type="match status" value="1"/>
</dbReference>
<dbReference type="PROSITE" id="PS00745">
    <property type="entry name" value="RF_PROK_I"/>
    <property type="match status" value="1"/>
</dbReference>
<reference key="1">
    <citation type="submission" date="2006-12" db="EMBL/GenBank/DDBJ databases">
        <title>Complete sequence of Shewanella amazonensis SB2B.</title>
        <authorList>
            <consortium name="US DOE Joint Genome Institute"/>
            <person name="Copeland A."/>
            <person name="Lucas S."/>
            <person name="Lapidus A."/>
            <person name="Barry K."/>
            <person name="Detter J.C."/>
            <person name="Glavina del Rio T."/>
            <person name="Hammon N."/>
            <person name="Israni S."/>
            <person name="Dalin E."/>
            <person name="Tice H."/>
            <person name="Pitluck S."/>
            <person name="Munk A.C."/>
            <person name="Brettin T."/>
            <person name="Bruce D."/>
            <person name="Han C."/>
            <person name="Tapia R."/>
            <person name="Gilna P."/>
            <person name="Schmutz J."/>
            <person name="Larimer F."/>
            <person name="Land M."/>
            <person name="Hauser L."/>
            <person name="Kyrpides N."/>
            <person name="Mikhailova N."/>
            <person name="Fredrickson J."/>
            <person name="Richardson P."/>
        </authorList>
    </citation>
    <scope>NUCLEOTIDE SEQUENCE [LARGE SCALE GENOMIC DNA]</scope>
    <source>
        <strain>ATCC BAA-1098 / SB2B</strain>
    </source>
</reference>
<keyword id="KW-0963">Cytoplasm</keyword>
<keyword id="KW-0488">Methylation</keyword>
<keyword id="KW-0648">Protein biosynthesis</keyword>
<keyword id="KW-1185">Reference proteome</keyword>
<gene>
    <name evidence="1" type="primary">prfA</name>
    <name type="ordered locus">Sama_2566</name>
</gene>